<sequence length="993" mass="107647">MFSASHFCSGSLMMSHPLSSLRDLEYHGAFVERHIGPNDVEIAQMLRVVGYDSLESLTDAIVPEKIRSTVALDLPKGITEEEALAKIRVIANKNRVFRSFIGQGYYGTHTPKVILRNILENPAWYTAYTPYQAEISQGRMEALINFQTMCADLTGMEIANASLLDEATAAAEAMSLAKRSAKSRSDLFFVHDAVHPQTLELLRTRAEPLGIVLRVGTPEEALQVDVFGILLQYPDTFGRIGDHRVLADAVHARGGLVAVASDLLALTLITPPGEWGADIVVGNSQRFGVPFGFGGPHAGFMACRDIYKRSIPGRLIGVSVDAAGHPAYRLALQTREQHIRREKATSNICTAQVLLAVMASMYAVYHGPQGLLRIAWRTHRMAAILAAALRGAGLTVGEYFFDTLHIVGIDALAIHCAAAAAGMNLRMIDNAQIGISLDETVTRSDVVALGQVFGVQVDVEALDAITADALPAGLLRSSAFLTHPVFNTHHSEHELLRYLRMLADKDLAMDRTMIPLGSCTMKLNATAEMIPVTWQEFACIHPLAPVVQWSGYRQLIDELEAMLVECTGYDAISLQPNSGAQGEYAGLLAIRAYHRSRGEERRNVCLIPESAHGTNPASAQLCGMQVVIIKCDRSGNVDVDDLRMKAEKYSDTLAALMVTYPSTHGVFEEAITEICEIVHAHGGQVYTDGANMNALVGVAKPGRWGSDVSHLNLHKTFCIPHGGGGPGVGPCAVKAHLAPFLPKTLPLPGDAAGLPVQGTQEAKVGMVSAANFGSASILPVSWMYITMMGAAGLRKATQVALLNANYIAKRLAPHYKTLYTGRHGLVAHECILDVRSLEKVSGVSAEDIAKRLIDFGFHAPTLSFPVAGTLMVEPTESESQQELDRFVDAMIQIRGEIAAIEKGHLDPEDNPLKQAPHTAVQVMASQWGHAYSRELAAFPLGVLHHAKYWPPVARVDNVYGDKHVMCACIPVEAYKEKGDSEIQDLIEEDASRC</sequence>
<organism>
    <name type="scientific">Xylella fastidiosa (strain Temecula1 / ATCC 700964)</name>
    <dbReference type="NCBI Taxonomy" id="183190"/>
    <lineage>
        <taxon>Bacteria</taxon>
        <taxon>Pseudomonadati</taxon>
        <taxon>Pseudomonadota</taxon>
        <taxon>Gammaproteobacteria</taxon>
        <taxon>Lysobacterales</taxon>
        <taxon>Lysobacteraceae</taxon>
        <taxon>Xylella</taxon>
    </lineage>
</organism>
<proteinExistence type="inferred from homology"/>
<comment type="function">
    <text evidence="1">The glycine cleavage system catalyzes the degradation of glycine. The P protein binds the alpha-amino group of glycine through its pyridoxal phosphate cofactor; CO(2) is released and the remaining methylamine moiety is then transferred to the lipoamide cofactor of the H protein.</text>
</comment>
<comment type="catalytic activity">
    <reaction evidence="1">
        <text>N(6)-[(R)-lipoyl]-L-lysyl-[glycine-cleavage complex H protein] + glycine + H(+) = N(6)-[(R)-S(8)-aminomethyldihydrolipoyl]-L-lysyl-[glycine-cleavage complex H protein] + CO2</text>
        <dbReference type="Rhea" id="RHEA:24304"/>
        <dbReference type="Rhea" id="RHEA-COMP:10494"/>
        <dbReference type="Rhea" id="RHEA-COMP:10495"/>
        <dbReference type="ChEBI" id="CHEBI:15378"/>
        <dbReference type="ChEBI" id="CHEBI:16526"/>
        <dbReference type="ChEBI" id="CHEBI:57305"/>
        <dbReference type="ChEBI" id="CHEBI:83099"/>
        <dbReference type="ChEBI" id="CHEBI:83143"/>
        <dbReference type="EC" id="1.4.4.2"/>
    </reaction>
</comment>
<comment type="cofactor">
    <cofactor evidence="1">
        <name>pyridoxal 5'-phosphate</name>
        <dbReference type="ChEBI" id="CHEBI:597326"/>
    </cofactor>
</comment>
<comment type="subunit">
    <text evidence="1">The glycine cleavage system is composed of four proteins: P, T, L and H.</text>
</comment>
<comment type="similarity">
    <text evidence="1">Belongs to the GcvP family.</text>
</comment>
<accession>Q87DR1</accession>
<name>GCSP_XYLFT</name>
<feature type="chain" id="PRO_0000166951" description="Glycine dehydrogenase (decarboxylating)">
    <location>
        <begin position="1"/>
        <end position="993"/>
    </location>
</feature>
<feature type="modified residue" description="N6-(pyridoxal phosphate)lysine" evidence="1">
    <location>
        <position position="715"/>
    </location>
</feature>
<reference key="1">
    <citation type="journal article" date="2003" name="J. Bacteriol.">
        <title>Comparative analyses of the complete genome sequences of Pierce's disease and citrus variegated chlorosis strains of Xylella fastidiosa.</title>
        <authorList>
            <person name="Van Sluys M.A."/>
            <person name="de Oliveira M.C."/>
            <person name="Monteiro-Vitorello C.B."/>
            <person name="Miyaki C.Y."/>
            <person name="Furlan L.R."/>
            <person name="Camargo L.E.A."/>
            <person name="da Silva A.C.R."/>
            <person name="Moon D.H."/>
            <person name="Takita M.A."/>
            <person name="Lemos E.G.M."/>
            <person name="Machado M.A."/>
            <person name="Ferro M.I.T."/>
            <person name="da Silva F.R."/>
            <person name="Goldman M.H.S."/>
            <person name="Goldman G.H."/>
            <person name="Lemos M.V.F."/>
            <person name="El-Dorry H."/>
            <person name="Tsai S.M."/>
            <person name="Carrer H."/>
            <person name="Carraro D.M."/>
            <person name="de Oliveira R.C."/>
            <person name="Nunes L.R."/>
            <person name="Siqueira W.J."/>
            <person name="Coutinho L.L."/>
            <person name="Kimura E.T."/>
            <person name="Ferro E.S."/>
            <person name="Harakava R."/>
            <person name="Kuramae E.E."/>
            <person name="Marino C.L."/>
            <person name="Giglioti E."/>
            <person name="Abreu I.L."/>
            <person name="Alves L.M.C."/>
            <person name="do Amaral A.M."/>
            <person name="Baia G.S."/>
            <person name="Blanco S.R."/>
            <person name="Brito M.S."/>
            <person name="Cannavan F.S."/>
            <person name="Celestino A.V."/>
            <person name="da Cunha A.F."/>
            <person name="Fenille R.C."/>
            <person name="Ferro J.A."/>
            <person name="Formighieri E.F."/>
            <person name="Kishi L.T."/>
            <person name="Leoni S.G."/>
            <person name="Oliveira A.R."/>
            <person name="Rosa V.E. Jr."/>
            <person name="Sassaki F.T."/>
            <person name="Sena J.A.D."/>
            <person name="de Souza A.A."/>
            <person name="Truffi D."/>
            <person name="Tsukumo F."/>
            <person name="Yanai G.M."/>
            <person name="Zaros L.G."/>
            <person name="Civerolo E.L."/>
            <person name="Simpson A.J.G."/>
            <person name="Almeida N.F. Jr."/>
            <person name="Setubal J.C."/>
            <person name="Kitajima J.P."/>
        </authorList>
    </citation>
    <scope>NUCLEOTIDE SEQUENCE [LARGE SCALE GENOMIC DNA]</scope>
    <source>
        <strain>Temecula1 / ATCC 700964</strain>
    </source>
</reference>
<keyword id="KW-0560">Oxidoreductase</keyword>
<keyword id="KW-0663">Pyridoxal phosphate</keyword>
<keyword id="KW-1185">Reference proteome</keyword>
<protein>
    <recommendedName>
        <fullName evidence="1">Glycine dehydrogenase (decarboxylating)</fullName>
        <ecNumber evidence="1">1.4.4.2</ecNumber>
    </recommendedName>
    <alternativeName>
        <fullName evidence="1">Glycine cleavage system P-protein</fullName>
    </alternativeName>
    <alternativeName>
        <fullName evidence="1">Glycine decarboxylase</fullName>
    </alternativeName>
    <alternativeName>
        <fullName evidence="1">Glycine dehydrogenase (aminomethyl-transferring)</fullName>
    </alternativeName>
</protein>
<dbReference type="EC" id="1.4.4.2" evidence="1"/>
<dbReference type="EMBL" id="AE009442">
    <property type="protein sequence ID" value="AAO28492.1"/>
    <property type="molecule type" value="Genomic_DNA"/>
</dbReference>
<dbReference type="SMR" id="Q87DR1"/>
<dbReference type="KEGG" id="xft:PD_0620"/>
<dbReference type="HOGENOM" id="CLU_004620_2_1_6"/>
<dbReference type="Proteomes" id="UP000002516">
    <property type="component" value="Chromosome"/>
</dbReference>
<dbReference type="GO" id="GO:0005829">
    <property type="term" value="C:cytosol"/>
    <property type="evidence" value="ECO:0007669"/>
    <property type="project" value="TreeGrafter"/>
</dbReference>
<dbReference type="GO" id="GO:0005960">
    <property type="term" value="C:glycine cleavage complex"/>
    <property type="evidence" value="ECO:0007669"/>
    <property type="project" value="TreeGrafter"/>
</dbReference>
<dbReference type="GO" id="GO:0016594">
    <property type="term" value="F:glycine binding"/>
    <property type="evidence" value="ECO:0007669"/>
    <property type="project" value="TreeGrafter"/>
</dbReference>
<dbReference type="GO" id="GO:0004375">
    <property type="term" value="F:glycine dehydrogenase (decarboxylating) activity"/>
    <property type="evidence" value="ECO:0007669"/>
    <property type="project" value="UniProtKB-EC"/>
</dbReference>
<dbReference type="GO" id="GO:0030170">
    <property type="term" value="F:pyridoxal phosphate binding"/>
    <property type="evidence" value="ECO:0007669"/>
    <property type="project" value="TreeGrafter"/>
</dbReference>
<dbReference type="GO" id="GO:0019464">
    <property type="term" value="P:glycine decarboxylation via glycine cleavage system"/>
    <property type="evidence" value="ECO:0007669"/>
    <property type="project" value="UniProtKB-UniRule"/>
</dbReference>
<dbReference type="CDD" id="cd00613">
    <property type="entry name" value="GDC-P"/>
    <property type="match status" value="2"/>
</dbReference>
<dbReference type="FunFam" id="3.40.640.10:FF:000005">
    <property type="entry name" value="Glycine dehydrogenase (decarboxylating), mitochondrial"/>
    <property type="match status" value="1"/>
</dbReference>
<dbReference type="FunFam" id="3.90.1150.10:FF:000007">
    <property type="entry name" value="Glycine dehydrogenase (decarboxylating), mitochondrial"/>
    <property type="match status" value="1"/>
</dbReference>
<dbReference type="FunFam" id="3.40.640.10:FF:000007">
    <property type="entry name" value="glycine dehydrogenase (Decarboxylating), mitochondrial"/>
    <property type="match status" value="1"/>
</dbReference>
<dbReference type="Gene3D" id="3.90.1150.10">
    <property type="entry name" value="Aspartate Aminotransferase, domain 1"/>
    <property type="match status" value="2"/>
</dbReference>
<dbReference type="Gene3D" id="3.40.640.10">
    <property type="entry name" value="Type I PLP-dependent aspartate aminotransferase-like (Major domain)"/>
    <property type="match status" value="2"/>
</dbReference>
<dbReference type="HAMAP" id="MF_00711">
    <property type="entry name" value="GcvP"/>
    <property type="match status" value="1"/>
</dbReference>
<dbReference type="InterPro" id="IPR003437">
    <property type="entry name" value="GcvP"/>
</dbReference>
<dbReference type="InterPro" id="IPR049316">
    <property type="entry name" value="GDC-P_C"/>
</dbReference>
<dbReference type="InterPro" id="IPR049315">
    <property type="entry name" value="GDC-P_N"/>
</dbReference>
<dbReference type="InterPro" id="IPR020581">
    <property type="entry name" value="GDC_P"/>
</dbReference>
<dbReference type="InterPro" id="IPR015424">
    <property type="entry name" value="PyrdxlP-dep_Trfase"/>
</dbReference>
<dbReference type="InterPro" id="IPR015421">
    <property type="entry name" value="PyrdxlP-dep_Trfase_major"/>
</dbReference>
<dbReference type="InterPro" id="IPR015422">
    <property type="entry name" value="PyrdxlP-dep_Trfase_small"/>
</dbReference>
<dbReference type="NCBIfam" id="TIGR00461">
    <property type="entry name" value="gcvP"/>
    <property type="match status" value="1"/>
</dbReference>
<dbReference type="NCBIfam" id="NF003346">
    <property type="entry name" value="PRK04366.1"/>
    <property type="match status" value="1"/>
</dbReference>
<dbReference type="PANTHER" id="PTHR11773:SF1">
    <property type="entry name" value="GLYCINE DEHYDROGENASE (DECARBOXYLATING), MITOCHONDRIAL"/>
    <property type="match status" value="1"/>
</dbReference>
<dbReference type="PANTHER" id="PTHR11773">
    <property type="entry name" value="GLYCINE DEHYDROGENASE, DECARBOXYLATING"/>
    <property type="match status" value="1"/>
</dbReference>
<dbReference type="Pfam" id="PF21478">
    <property type="entry name" value="GcvP2_C"/>
    <property type="match status" value="1"/>
</dbReference>
<dbReference type="Pfam" id="PF02347">
    <property type="entry name" value="GDC-P"/>
    <property type="match status" value="1"/>
</dbReference>
<dbReference type="SUPFAM" id="SSF53383">
    <property type="entry name" value="PLP-dependent transferases"/>
    <property type="match status" value="2"/>
</dbReference>
<evidence type="ECO:0000255" key="1">
    <source>
        <dbReference type="HAMAP-Rule" id="MF_00711"/>
    </source>
</evidence>
<gene>
    <name evidence="1" type="primary">gcvP</name>
    <name type="ordered locus">PD_0620</name>
</gene>